<name>PSS_YEAST</name>
<organism>
    <name type="scientific">Saccharomyces cerevisiae (strain ATCC 204508 / S288c)</name>
    <name type="common">Baker's yeast</name>
    <dbReference type="NCBI Taxonomy" id="559292"/>
    <lineage>
        <taxon>Eukaryota</taxon>
        <taxon>Fungi</taxon>
        <taxon>Dikarya</taxon>
        <taxon>Ascomycota</taxon>
        <taxon>Saccharomycotina</taxon>
        <taxon>Saccharomycetes</taxon>
        <taxon>Saccharomycetales</taxon>
        <taxon>Saccharomycetaceae</taxon>
        <taxon>Saccharomyces</taxon>
    </lineage>
</organism>
<keyword id="KW-0903">Direct protein sequencing</keyword>
<keyword id="KW-0256">Endoplasmic reticulum</keyword>
<keyword id="KW-0444">Lipid biosynthesis</keyword>
<keyword id="KW-0443">Lipid metabolism</keyword>
<keyword id="KW-0472">Membrane</keyword>
<keyword id="KW-0492">Microsome</keyword>
<keyword id="KW-0496">Mitochondrion</keyword>
<keyword id="KW-1000">Mitochondrion outer membrane</keyword>
<keyword id="KW-0594">Phospholipid biosynthesis</keyword>
<keyword id="KW-1208">Phospholipid metabolism</keyword>
<keyword id="KW-0597">Phosphoprotein</keyword>
<keyword id="KW-1185">Reference proteome</keyword>
<keyword id="KW-0808">Transferase</keyword>
<keyword id="KW-0812">Transmembrane</keyword>
<keyword id="KW-1133">Transmembrane helix</keyword>
<sequence length="276" mass="30805">MVESDEDFAPQEFPHTDTDVIVNEHRDENDGYASDEVGGTLSRRASSIFSINTTPLAPPNATDIQKFTSDEHHFSMMRNLHMADYITMLNGFSGFYSIVSCLRFTLTGKPHYVQRAHFFILLGMCFDFLDGRVARLRNRSSLMGQELDSLADLVSFGVAPAAIAFAIGFQTTFDVMILSFFVLCGLARLARFNVTVAQLPKDSSTGKSKYFEGLPMPTTLALVLGMAYCVRKGLIFDNIPFGIFREDQILEFHPIILVFFIHGCGMISKSLKIPKP</sequence>
<reference key="1">
    <citation type="journal article" date="1987" name="Eur. J. Biochem.">
        <title>Nucleotide sequence and characterization of the yeast PSS gene encoding phosphatidylserine synthase.</title>
        <authorList>
            <person name="Nikawa J."/>
            <person name="Tsukagoschi Y."/>
            <person name="Kodaki T."/>
            <person name="Yamashita S."/>
        </authorList>
    </citation>
    <scope>NUCLEOTIDE SEQUENCE [GENOMIC DNA]</scope>
</reference>
<reference key="2">
    <citation type="journal article" date="1987" name="J. Biochem.">
        <title>Primary structure and product characterization of the Saccharomyces cerevisiae CHO1 gene that encodes phosphatidylserine synthase.</title>
        <authorList>
            <person name="Kiyono K."/>
            <person name="Miura K."/>
            <person name="Kushima Y."/>
            <person name="Hikiji T."/>
            <person name="Fukushima M."/>
            <person name="Shibuya I."/>
            <person name="Ohta A."/>
        </authorList>
    </citation>
    <scope>NUCLEOTIDE SEQUENCE [GENOMIC DNA]</scope>
    <scope>PROTEIN SEQUENCE OF 2-15</scope>
</reference>
<reference key="3">
    <citation type="journal article" date="1997" name="Nature">
        <title>The nucleotide sequence of Saccharomyces cerevisiae chromosome V.</title>
        <authorList>
            <person name="Dietrich F.S."/>
            <person name="Mulligan J.T."/>
            <person name="Hennessy K.M."/>
            <person name="Yelton M.A."/>
            <person name="Allen E."/>
            <person name="Araujo R."/>
            <person name="Aviles E."/>
            <person name="Berno A."/>
            <person name="Brennan T."/>
            <person name="Carpenter J."/>
            <person name="Chen E."/>
            <person name="Cherry J.M."/>
            <person name="Chung E."/>
            <person name="Duncan M."/>
            <person name="Guzman E."/>
            <person name="Hartzell G."/>
            <person name="Hunicke-Smith S."/>
            <person name="Hyman R.W."/>
            <person name="Kayser A."/>
            <person name="Komp C."/>
            <person name="Lashkari D."/>
            <person name="Lew H."/>
            <person name="Lin D."/>
            <person name="Mosedale D."/>
            <person name="Nakahara K."/>
            <person name="Namath A."/>
            <person name="Norgren R."/>
            <person name="Oefner P."/>
            <person name="Oh C."/>
            <person name="Petel F.X."/>
            <person name="Roberts D."/>
            <person name="Sehl P."/>
            <person name="Schramm S."/>
            <person name="Shogren T."/>
            <person name="Smith V."/>
            <person name="Taylor P."/>
            <person name="Wei Y."/>
            <person name="Botstein D."/>
            <person name="Davis R.W."/>
        </authorList>
    </citation>
    <scope>NUCLEOTIDE SEQUENCE [LARGE SCALE GENOMIC DNA]</scope>
    <source>
        <strain>ATCC 204508 / S288c</strain>
    </source>
</reference>
<reference key="4">
    <citation type="journal article" date="2014" name="G3 (Bethesda)">
        <title>The reference genome sequence of Saccharomyces cerevisiae: Then and now.</title>
        <authorList>
            <person name="Engel S.R."/>
            <person name="Dietrich F.S."/>
            <person name="Fisk D.G."/>
            <person name="Binkley G."/>
            <person name="Balakrishnan R."/>
            <person name="Costanzo M.C."/>
            <person name="Dwight S.S."/>
            <person name="Hitz B.C."/>
            <person name="Karra K."/>
            <person name="Nash R.S."/>
            <person name="Weng S."/>
            <person name="Wong E.D."/>
            <person name="Lloyd P."/>
            <person name="Skrzypek M.S."/>
            <person name="Miyasato S.R."/>
            <person name="Simison M."/>
            <person name="Cherry J.M."/>
        </authorList>
    </citation>
    <scope>GENOME REANNOTATION</scope>
    <source>
        <strain>ATCC 204508 / S288c</strain>
    </source>
</reference>
<reference key="5">
    <citation type="journal article" date="1981" name="Can. J. Microbiol.">
        <title>Solubilization of microsomal-associated phosphatidylserine synthase and phosphatidylinositol synthase from Saccharomyces cerevisiae.</title>
        <authorList>
            <person name="Carman G.M."/>
            <person name="Matas J."/>
        </authorList>
    </citation>
    <scope>CATALYTIC ACTIVITY</scope>
    <scope>BIOPHYSICOCHEMICAL PROPERTIES</scope>
</reference>
<reference key="6">
    <citation type="journal article" date="1984" name="J. Biol. Chem.">
        <title>Phosphatidylserine synthesis in Saccharomyces cerevisiae. Purification and characterization of membrane-associated phosphatidylserine synthase.</title>
        <authorList>
            <person name="Bae-Lee M.S."/>
            <person name="Carman G.M."/>
        </authorList>
    </citation>
    <scope>CATALYTIC ACTIVITY</scope>
    <scope>BIOPHYSICOCHEMICAL PROPERTIES</scope>
</reference>
<reference key="7">
    <citation type="journal article" date="1986" name="J. Bacteriol.">
        <title>Subcellular and submitochondrial localization of phospholipid-synthesizing enzymes in Saccharomyces cerevisiae.</title>
        <authorList>
            <person name="Kuchler K."/>
            <person name="Daum G."/>
            <person name="Paltauf F."/>
        </authorList>
    </citation>
    <scope>SUBCELLULAR LOCATION</scope>
</reference>
<reference key="8">
    <citation type="journal article" date="2007" name="J. Proteome Res.">
        <title>Large-scale phosphorylation analysis of alpha-factor-arrested Saccharomyces cerevisiae.</title>
        <authorList>
            <person name="Li X."/>
            <person name="Gerber S.A."/>
            <person name="Rudner A.D."/>
            <person name="Beausoleil S.A."/>
            <person name="Haas W."/>
            <person name="Villen J."/>
            <person name="Elias J.E."/>
            <person name="Gygi S.P."/>
        </authorList>
    </citation>
    <scope>PHOSPHORYLATION [LARGE SCALE ANALYSIS] AT SER-4; SER-34; SER-42; SER-46; SER-47 AND SER-50</scope>
    <scope>IDENTIFICATION BY MASS SPECTROMETRY [LARGE SCALE ANALYSIS]</scope>
    <source>
        <strain>ADR376</strain>
    </source>
</reference>
<reference key="9">
    <citation type="journal article" date="2008" name="Mol. Cell. Proteomics">
        <title>A multidimensional chromatography technology for in-depth phosphoproteome analysis.</title>
        <authorList>
            <person name="Albuquerque C.P."/>
            <person name="Smolka M.B."/>
            <person name="Payne S.H."/>
            <person name="Bafna V."/>
            <person name="Eng J."/>
            <person name="Zhou H."/>
        </authorList>
    </citation>
    <scope>PHOSPHORYLATION [LARGE SCALE ANALYSIS] AT SER-4 AND SER-34</scope>
    <scope>IDENTIFICATION BY MASS SPECTROMETRY [LARGE SCALE ANALYSIS]</scope>
</reference>
<reference key="10">
    <citation type="journal article" date="2009" name="Science">
        <title>Global analysis of Cdk1 substrate phosphorylation sites provides insights into evolution.</title>
        <authorList>
            <person name="Holt L.J."/>
            <person name="Tuch B.B."/>
            <person name="Villen J."/>
            <person name="Johnson A.D."/>
            <person name="Gygi S.P."/>
            <person name="Morgan D.O."/>
        </authorList>
    </citation>
    <scope>PHOSPHORYLATION [LARGE SCALE ANALYSIS] AT SER-4; SER-34; SER-42; SER-46; SER-47 AND SER-50</scope>
    <scope>IDENTIFICATION BY MASS SPECTROMETRY [LARGE SCALE ANALYSIS]</scope>
</reference>
<feature type="initiator methionine" description="Removed" evidence="3">
    <location>
        <position position="1"/>
    </location>
</feature>
<feature type="chain" id="PRO_0000056801" description="CDP-diacylglycerol--serine O-phosphatidyltransferase">
    <location>
        <begin position="2"/>
        <end position="276"/>
    </location>
</feature>
<feature type="transmembrane region" description="Helical" evidence="1">
    <location>
        <begin position="82"/>
        <end position="102"/>
    </location>
</feature>
<feature type="transmembrane region" description="Helical" evidence="1">
    <location>
        <begin position="163"/>
        <end position="183"/>
    </location>
</feature>
<feature type="transmembrane region" description="Helical" evidence="1">
    <location>
        <begin position="210"/>
        <end position="230"/>
    </location>
</feature>
<feature type="transmembrane region" description="Helical" evidence="1">
    <location>
        <begin position="248"/>
        <end position="268"/>
    </location>
</feature>
<feature type="region of interest" description="Disordered" evidence="2">
    <location>
        <begin position="1"/>
        <end position="21"/>
    </location>
</feature>
<feature type="modified residue" description="Phosphoserine" evidence="9 10 11">
    <location>
        <position position="4"/>
    </location>
</feature>
<feature type="modified residue" description="Phosphoserine" evidence="9 10 11">
    <location>
        <position position="34"/>
    </location>
</feature>
<feature type="modified residue" description="Phosphoserine" evidence="9 11">
    <location>
        <position position="42"/>
    </location>
</feature>
<feature type="modified residue" description="Phosphoserine" evidence="9 11">
    <location>
        <position position="46"/>
    </location>
</feature>
<feature type="modified residue" description="Phosphoserine" evidence="9 11">
    <location>
        <position position="47"/>
    </location>
</feature>
<feature type="modified residue" description="Phosphoserine" evidence="9 11">
    <location>
        <position position="50"/>
    </location>
</feature>
<feature type="sequence conflict" description="In Ref. 2; BAA00121." evidence="7" ref="2">
    <original>G</original>
    <variation>A</variation>
    <location>
        <position position="123"/>
    </location>
</feature>
<feature type="sequence conflict" description="In Ref. 2; BAA00121." evidence="7" ref="2">
    <original>R</original>
    <variation>T</variation>
    <location>
        <position position="191"/>
    </location>
</feature>
<feature type="sequence conflict" description="In Ref. 2; BAA00121." evidence="7" ref="2">
    <original>P</original>
    <variation>A</variation>
    <location>
        <position position="276"/>
    </location>
</feature>
<dbReference type="EC" id="2.7.8.8" evidence="5 6"/>
<dbReference type="EMBL" id="X05944">
    <property type="protein sequence ID" value="CAA29376.1"/>
    <property type="molecule type" value="Genomic_DNA"/>
</dbReference>
<dbReference type="EMBL" id="D00171">
    <property type="protein sequence ID" value="BAA00121.1"/>
    <property type="molecule type" value="Genomic_DNA"/>
</dbReference>
<dbReference type="EMBL" id="U18778">
    <property type="protein sequence ID" value="AAB64559.1"/>
    <property type="molecule type" value="Genomic_DNA"/>
</dbReference>
<dbReference type="EMBL" id="BK006939">
    <property type="protein sequence ID" value="DAA07679.1"/>
    <property type="molecule type" value="Genomic_DNA"/>
</dbReference>
<dbReference type="PIR" id="S00080">
    <property type="entry name" value="S00080"/>
</dbReference>
<dbReference type="RefSeq" id="NP_010943.3">
    <property type="nucleotide sequence ID" value="NM_001178917.3"/>
</dbReference>
<dbReference type="SMR" id="P08456"/>
<dbReference type="BioGRID" id="36761">
    <property type="interactions" value="60"/>
</dbReference>
<dbReference type="DIP" id="DIP-5331N"/>
<dbReference type="FunCoup" id="P08456">
    <property type="interactions" value="143"/>
</dbReference>
<dbReference type="IntAct" id="P08456">
    <property type="interactions" value="7"/>
</dbReference>
<dbReference type="MINT" id="P08456"/>
<dbReference type="STRING" id="4932.YER026C"/>
<dbReference type="CarbonylDB" id="P08456"/>
<dbReference type="iPTMnet" id="P08456"/>
<dbReference type="PaxDb" id="4932-YER026C"/>
<dbReference type="PeptideAtlas" id="P08456"/>
<dbReference type="DNASU" id="856748"/>
<dbReference type="EnsemblFungi" id="YER026C_mRNA">
    <property type="protein sequence ID" value="YER026C"/>
    <property type="gene ID" value="YER026C"/>
</dbReference>
<dbReference type="GeneID" id="856748"/>
<dbReference type="KEGG" id="sce:YER026C"/>
<dbReference type="AGR" id="SGD:S000000828"/>
<dbReference type="SGD" id="S000000828">
    <property type="gene designation" value="CHO1"/>
</dbReference>
<dbReference type="VEuPathDB" id="FungiDB:YER026C"/>
<dbReference type="eggNOG" id="ENOG502QPJG">
    <property type="taxonomic scope" value="Eukaryota"/>
</dbReference>
<dbReference type="GeneTree" id="ENSGT00940000154169"/>
<dbReference type="HOGENOM" id="CLU_049944_5_0_1"/>
<dbReference type="InParanoid" id="P08456"/>
<dbReference type="OMA" id="HGCGMIS"/>
<dbReference type="OrthoDB" id="448573at2759"/>
<dbReference type="BioCyc" id="YEAST:YER026C-MONOMER"/>
<dbReference type="BRENDA" id="2.7.8.8">
    <property type="organism ID" value="984"/>
</dbReference>
<dbReference type="UniPathway" id="UPA00558">
    <property type="reaction ID" value="UER00615"/>
</dbReference>
<dbReference type="BioGRID-ORCS" id="856748">
    <property type="hits" value="8 hits in 10 CRISPR screens"/>
</dbReference>
<dbReference type="PRO" id="PR:P08456"/>
<dbReference type="Proteomes" id="UP000002311">
    <property type="component" value="Chromosome V"/>
</dbReference>
<dbReference type="RNAct" id="P08456">
    <property type="molecule type" value="protein"/>
</dbReference>
<dbReference type="GO" id="GO:0005789">
    <property type="term" value="C:endoplasmic reticulum membrane"/>
    <property type="evidence" value="ECO:0007669"/>
    <property type="project" value="UniProtKB-SubCell"/>
</dbReference>
<dbReference type="GO" id="GO:0016020">
    <property type="term" value="C:membrane"/>
    <property type="evidence" value="ECO:0000314"/>
    <property type="project" value="SGD"/>
</dbReference>
<dbReference type="GO" id="GO:0005741">
    <property type="term" value="C:mitochondrial outer membrane"/>
    <property type="evidence" value="ECO:0000314"/>
    <property type="project" value="SGD"/>
</dbReference>
<dbReference type="GO" id="GO:0003882">
    <property type="term" value="F:CDP-diacylglycerol-serine O-phosphatidyltransferase activity"/>
    <property type="evidence" value="ECO:0000314"/>
    <property type="project" value="SGD"/>
</dbReference>
<dbReference type="GO" id="GO:0006646">
    <property type="term" value="P:phosphatidylethanolamine biosynthetic process"/>
    <property type="evidence" value="ECO:0007669"/>
    <property type="project" value="UniProtKB-UniPathway"/>
</dbReference>
<dbReference type="GO" id="GO:0006659">
    <property type="term" value="P:phosphatidylserine biosynthetic process"/>
    <property type="evidence" value="ECO:0000314"/>
    <property type="project" value="SGD"/>
</dbReference>
<dbReference type="FunFam" id="1.20.120.1760:FF:000022">
    <property type="entry name" value="CDP-diacylglycerol--serine O-phosphatidyltransferase"/>
    <property type="match status" value="1"/>
</dbReference>
<dbReference type="Gene3D" id="1.20.120.1760">
    <property type="match status" value="1"/>
</dbReference>
<dbReference type="InterPro" id="IPR050324">
    <property type="entry name" value="CDP-alcohol_PTase-I"/>
</dbReference>
<dbReference type="InterPro" id="IPR004533">
    <property type="entry name" value="CDP-diaglyc--ser_O-PTrfase"/>
</dbReference>
<dbReference type="InterPro" id="IPR016271">
    <property type="entry name" value="CDP-diaglyc--ser_O-PTrfase_fun"/>
</dbReference>
<dbReference type="InterPro" id="IPR000462">
    <property type="entry name" value="CDP-OH_P_trans"/>
</dbReference>
<dbReference type="InterPro" id="IPR043130">
    <property type="entry name" value="CDP-OH_PTrfase_TM_dom"/>
</dbReference>
<dbReference type="InterPro" id="IPR048254">
    <property type="entry name" value="CDP_ALCOHOL_P_TRANSF_CS"/>
</dbReference>
<dbReference type="NCBIfam" id="TIGR00473">
    <property type="entry name" value="pssA"/>
    <property type="match status" value="1"/>
</dbReference>
<dbReference type="PANTHER" id="PTHR14269">
    <property type="entry name" value="CDP-DIACYLGLYCEROL--GLYCEROL-3-PHOSPHATE 3-PHOSPHATIDYLTRANSFERASE-RELATED"/>
    <property type="match status" value="1"/>
</dbReference>
<dbReference type="PANTHER" id="PTHR14269:SF61">
    <property type="entry name" value="CDP-DIACYLGLYCEROL--SERINE O-PHOSPHATIDYLTRANSFERASE"/>
    <property type="match status" value="1"/>
</dbReference>
<dbReference type="Pfam" id="PF01066">
    <property type="entry name" value="CDP-OH_P_transf"/>
    <property type="match status" value="1"/>
</dbReference>
<dbReference type="PIRSF" id="PIRSF000852">
    <property type="entry name" value="Phosphatidylserine_synth_fun"/>
    <property type="match status" value="1"/>
</dbReference>
<dbReference type="PROSITE" id="PS00379">
    <property type="entry name" value="CDP_ALCOHOL_P_TRANSF"/>
    <property type="match status" value="1"/>
</dbReference>
<comment type="function">
    <text evidence="5 6">Catalyzes the synthesis of phosphatidylserine (PtdSer).</text>
</comment>
<comment type="catalytic activity">
    <reaction evidence="5 6">
        <text>a CDP-1,2-diacyl-sn-glycerol + L-serine = a 1,2-diacyl-sn-glycero-3-phospho-L-serine + CMP + H(+)</text>
        <dbReference type="Rhea" id="RHEA:16913"/>
        <dbReference type="ChEBI" id="CHEBI:15378"/>
        <dbReference type="ChEBI" id="CHEBI:33384"/>
        <dbReference type="ChEBI" id="CHEBI:57262"/>
        <dbReference type="ChEBI" id="CHEBI:58332"/>
        <dbReference type="ChEBI" id="CHEBI:60377"/>
        <dbReference type="EC" id="2.7.8.8"/>
    </reaction>
</comment>
<comment type="cofactor">
    <cofactor evidence="5 6">
        <name>Mn(2+)</name>
        <dbReference type="ChEBI" id="CHEBI:29035"/>
    </cofactor>
    <cofactor evidence="5">
        <name>Mg(2+)</name>
        <dbReference type="ChEBI" id="CHEBI:18420"/>
    </cofactor>
    <text evidence="5">Divalent metal cations; Mn(2+) or Mg(2+).</text>
</comment>
<comment type="biophysicochemical properties">
    <kinetics>
        <KM evidence="6">0.1 mM for CDP-diacylglycerol</KM>
        <KM evidence="5">60 uM for CDP-diacylglycerol</KM>
        <KM evidence="6">0.25 mM for serine</KM>
        <KM evidence="5">0.58 mM for serine</KM>
    </kinetics>
    <phDependence>
        <text evidence="5 6">Optimum pH is 8.</text>
    </phDependence>
    <temperatureDependence>
        <text evidence="6">Thermally inactivated at temperatures above 30 degrees Celsius.</text>
    </temperatureDependence>
</comment>
<comment type="pathway">
    <text evidence="8">Phospholipid metabolism; phosphatidylethanolamine biosynthesis; phosphatidylethanolamine from CDP-diacylglycerol: step 1/2.</text>
</comment>
<comment type="subcellular location">
    <subcellularLocation>
        <location evidence="6">Microsome membrane</location>
        <topology evidence="6">Multi-pass membrane protein</topology>
    </subcellularLocation>
    <subcellularLocation>
        <location>Endoplasmic reticulum membrane</location>
        <topology>Multi-pass membrane protein</topology>
    </subcellularLocation>
    <subcellularLocation>
        <location evidence="4">Mitochondrion outer membrane</location>
        <topology evidence="4">Multi-pass membrane protein</topology>
    </subcellularLocation>
</comment>
<comment type="similarity">
    <text evidence="7">Belongs to the CDP-alcohol phosphatidyltransferase class-I family.</text>
</comment>
<evidence type="ECO:0000255" key="1"/>
<evidence type="ECO:0000256" key="2">
    <source>
        <dbReference type="SAM" id="MobiDB-lite"/>
    </source>
</evidence>
<evidence type="ECO:0000269" key="3">
    <source>
    </source>
</evidence>
<evidence type="ECO:0000269" key="4">
    <source>
    </source>
</evidence>
<evidence type="ECO:0000269" key="5">
    <source>
    </source>
</evidence>
<evidence type="ECO:0000269" key="6">
    <source>
    </source>
</evidence>
<evidence type="ECO:0000305" key="7"/>
<evidence type="ECO:0000305" key="8">
    <source>
    </source>
</evidence>
<evidence type="ECO:0007744" key="9">
    <source>
    </source>
</evidence>
<evidence type="ECO:0007744" key="10">
    <source>
    </source>
</evidence>
<evidence type="ECO:0007744" key="11">
    <source>
    </source>
</evidence>
<proteinExistence type="evidence at protein level"/>
<protein>
    <recommendedName>
        <fullName>CDP-diacylglycerol--serine O-phosphatidyltransferase</fullName>
        <ecNumber evidence="5 6">2.7.8.8</ecNumber>
    </recommendedName>
    <alternativeName>
        <fullName>Phosphatidylserine synthase</fullName>
        <shortName>PSS</shortName>
    </alternativeName>
</protein>
<accession>P08456</accession>
<accession>D3DLS5</accession>
<gene>
    <name type="primary">CHO1</name>
    <name type="synonym">PSS1</name>
    <name type="ordered locus">YER026C</name>
</gene>